<gene>
    <name evidence="1" type="primary">rimP</name>
    <name type="ordered locus">RPB_0597</name>
</gene>
<proteinExistence type="inferred from homology"/>
<feature type="chain" id="PRO_1000064755" description="Ribosome maturation factor RimP">
    <location>
        <begin position="1"/>
        <end position="259"/>
    </location>
</feature>
<feature type="region of interest" description="Disordered" evidence="2">
    <location>
        <begin position="186"/>
        <end position="259"/>
    </location>
</feature>
<feature type="compositionally biased region" description="Basic and acidic residues" evidence="2">
    <location>
        <begin position="186"/>
        <end position="195"/>
    </location>
</feature>
<feature type="compositionally biased region" description="Basic residues" evidence="2">
    <location>
        <begin position="239"/>
        <end position="248"/>
    </location>
</feature>
<dbReference type="EMBL" id="CP000250">
    <property type="protein sequence ID" value="ABD05308.1"/>
    <property type="molecule type" value="Genomic_DNA"/>
</dbReference>
<dbReference type="RefSeq" id="WP_011439498.1">
    <property type="nucleotide sequence ID" value="NC_007778.1"/>
</dbReference>
<dbReference type="SMR" id="Q2J2K2"/>
<dbReference type="STRING" id="316058.RPB_0597"/>
<dbReference type="KEGG" id="rpb:RPB_0597"/>
<dbReference type="eggNOG" id="COG0779">
    <property type="taxonomic scope" value="Bacteria"/>
</dbReference>
<dbReference type="HOGENOM" id="CLU_070525_0_0_5"/>
<dbReference type="OrthoDB" id="9805006at2"/>
<dbReference type="Proteomes" id="UP000008809">
    <property type="component" value="Chromosome"/>
</dbReference>
<dbReference type="GO" id="GO:0005829">
    <property type="term" value="C:cytosol"/>
    <property type="evidence" value="ECO:0007669"/>
    <property type="project" value="TreeGrafter"/>
</dbReference>
<dbReference type="GO" id="GO:0000028">
    <property type="term" value="P:ribosomal small subunit assembly"/>
    <property type="evidence" value="ECO:0007669"/>
    <property type="project" value="TreeGrafter"/>
</dbReference>
<dbReference type="GO" id="GO:0006412">
    <property type="term" value="P:translation"/>
    <property type="evidence" value="ECO:0007669"/>
    <property type="project" value="TreeGrafter"/>
</dbReference>
<dbReference type="CDD" id="cd01734">
    <property type="entry name" value="YlxS_C"/>
    <property type="match status" value="1"/>
</dbReference>
<dbReference type="Gene3D" id="2.30.30.180">
    <property type="entry name" value="Ribosome maturation factor RimP, C-terminal domain"/>
    <property type="match status" value="1"/>
</dbReference>
<dbReference type="Gene3D" id="3.30.300.70">
    <property type="entry name" value="RimP-like superfamily, N-terminal"/>
    <property type="match status" value="1"/>
</dbReference>
<dbReference type="HAMAP" id="MF_01077">
    <property type="entry name" value="RimP"/>
    <property type="match status" value="1"/>
</dbReference>
<dbReference type="InterPro" id="IPR003728">
    <property type="entry name" value="Ribosome_maturation_RimP"/>
</dbReference>
<dbReference type="InterPro" id="IPR028998">
    <property type="entry name" value="RimP_C"/>
</dbReference>
<dbReference type="InterPro" id="IPR036847">
    <property type="entry name" value="RimP_C_sf"/>
</dbReference>
<dbReference type="InterPro" id="IPR028989">
    <property type="entry name" value="RimP_N"/>
</dbReference>
<dbReference type="InterPro" id="IPR035956">
    <property type="entry name" value="RimP_N_sf"/>
</dbReference>
<dbReference type="NCBIfam" id="NF000932">
    <property type="entry name" value="PRK00092.2-5"/>
    <property type="match status" value="1"/>
</dbReference>
<dbReference type="NCBIfam" id="NF000933">
    <property type="entry name" value="PRK00092.2-6"/>
    <property type="match status" value="1"/>
</dbReference>
<dbReference type="PANTHER" id="PTHR33867">
    <property type="entry name" value="RIBOSOME MATURATION FACTOR RIMP"/>
    <property type="match status" value="1"/>
</dbReference>
<dbReference type="PANTHER" id="PTHR33867:SF1">
    <property type="entry name" value="RIBOSOME MATURATION FACTOR RIMP"/>
    <property type="match status" value="1"/>
</dbReference>
<dbReference type="Pfam" id="PF17384">
    <property type="entry name" value="DUF150_C"/>
    <property type="match status" value="1"/>
</dbReference>
<dbReference type="Pfam" id="PF02576">
    <property type="entry name" value="RimP_N"/>
    <property type="match status" value="1"/>
</dbReference>
<dbReference type="SUPFAM" id="SSF74942">
    <property type="entry name" value="YhbC-like, C-terminal domain"/>
    <property type="match status" value="1"/>
</dbReference>
<dbReference type="SUPFAM" id="SSF75420">
    <property type="entry name" value="YhbC-like, N-terminal domain"/>
    <property type="match status" value="1"/>
</dbReference>
<comment type="function">
    <text evidence="1">Required for maturation of 30S ribosomal subunits.</text>
</comment>
<comment type="subcellular location">
    <subcellularLocation>
        <location evidence="1">Cytoplasm</location>
    </subcellularLocation>
</comment>
<comment type="similarity">
    <text evidence="1">Belongs to the RimP family.</text>
</comment>
<evidence type="ECO:0000255" key="1">
    <source>
        <dbReference type="HAMAP-Rule" id="MF_01077"/>
    </source>
</evidence>
<evidence type="ECO:0000256" key="2">
    <source>
        <dbReference type="SAM" id="MobiDB-lite"/>
    </source>
</evidence>
<sequence>MTDPIADSVAPDLLDEPRLVVEPGVAARFGAVAEPVLLAMGYRLVRIKVSAEAGCTVQIMAERPDGTMLIEDCEAVSKALSPVLDVTDPIEKAYRLEISSPGIDRPLVRRSDFARYSGHLVKIEMAVPHQGRKRYRGLLDGVEGDAIRIQREGVKDEDPLVLLPMHDIGDARLVLTDELIAESMRRGKQAERELKQSLGLAPPPPPHAKRSDPKKSNAPKPKPKPPVKAAAKPKPTNTKQHRLAAGRSRRGDTDLSEGD</sequence>
<organism>
    <name type="scientific">Rhodopseudomonas palustris (strain HaA2)</name>
    <dbReference type="NCBI Taxonomy" id="316058"/>
    <lineage>
        <taxon>Bacteria</taxon>
        <taxon>Pseudomonadati</taxon>
        <taxon>Pseudomonadota</taxon>
        <taxon>Alphaproteobacteria</taxon>
        <taxon>Hyphomicrobiales</taxon>
        <taxon>Nitrobacteraceae</taxon>
        <taxon>Rhodopseudomonas</taxon>
    </lineage>
</organism>
<name>RIMP_RHOP2</name>
<accession>Q2J2K2</accession>
<reference key="1">
    <citation type="submission" date="2006-01" db="EMBL/GenBank/DDBJ databases">
        <title>Complete sequence of Rhodopseudomonas palustris HaA2.</title>
        <authorList>
            <consortium name="US DOE Joint Genome Institute"/>
            <person name="Copeland A."/>
            <person name="Lucas S."/>
            <person name="Lapidus A."/>
            <person name="Barry K."/>
            <person name="Detter J.C."/>
            <person name="Glavina T."/>
            <person name="Hammon N."/>
            <person name="Israni S."/>
            <person name="Pitluck S."/>
            <person name="Chain P."/>
            <person name="Malfatti S."/>
            <person name="Shin M."/>
            <person name="Vergez L."/>
            <person name="Schmutz J."/>
            <person name="Larimer F."/>
            <person name="Land M."/>
            <person name="Hauser L."/>
            <person name="Pelletier D.A."/>
            <person name="Kyrpides N."/>
            <person name="Anderson I."/>
            <person name="Oda Y."/>
            <person name="Harwood C.S."/>
            <person name="Richardson P."/>
        </authorList>
    </citation>
    <scope>NUCLEOTIDE SEQUENCE [LARGE SCALE GENOMIC DNA]</scope>
    <source>
        <strain>HaA2</strain>
    </source>
</reference>
<protein>
    <recommendedName>
        <fullName evidence="1">Ribosome maturation factor RimP</fullName>
    </recommendedName>
</protein>
<keyword id="KW-0963">Cytoplasm</keyword>
<keyword id="KW-1185">Reference proteome</keyword>
<keyword id="KW-0690">Ribosome biogenesis</keyword>